<protein>
    <recommendedName>
        <fullName evidence="1">Dihydroorotate dehydrogenase (quinone)</fullName>
        <ecNumber evidence="1">1.3.5.2</ecNumber>
    </recommendedName>
    <alternativeName>
        <fullName evidence="1">DHOdehase</fullName>
        <shortName evidence="1">DHOD</shortName>
        <shortName evidence="1">DHODase</shortName>
    </alternativeName>
    <alternativeName>
        <fullName evidence="1">Dihydroorotate oxidase</fullName>
    </alternativeName>
</protein>
<sequence>MLYSLLRPLVFALEPETAHGIAFNAMETAHRLGLYRARPAPCRSRSIMGLTFPNPVGLAAGLDKNGEHIDALAALGFGFIEIGTVTPRPQPGNPKPRLFRLPQANSIINRMGFNNNGIEGLVANVKAMDYKGILGINIGKNFDTPVEKAVDDYLICLRKAYRYASYITVNISSPNTPNLRQLQQATELDSLLGTLKLNQQRLADEHGKYTPLLVKIAPDLELPEIDSIAALLMKHRVDGVIATNTTLSRAGVETLPHAREAGGLSGAPLAKRATSVVARLHHALQGALPIIGVGGIMDAAGATEKIAAGASLIQVYSGLVYRGPHLVGEIAQVLCNANGGGLDGASST</sequence>
<feature type="chain" id="PRO_0000336479" description="Dihydroorotate dehydrogenase (quinone)">
    <location>
        <begin position="1"/>
        <end position="348"/>
    </location>
</feature>
<feature type="active site" description="Nucleophile" evidence="1">
    <location>
        <position position="173"/>
    </location>
</feature>
<feature type="binding site" evidence="1">
    <location>
        <begin position="60"/>
        <end position="64"/>
    </location>
    <ligand>
        <name>FMN</name>
        <dbReference type="ChEBI" id="CHEBI:58210"/>
    </ligand>
</feature>
<feature type="binding site" evidence="1">
    <location>
        <position position="64"/>
    </location>
    <ligand>
        <name>substrate</name>
    </ligand>
</feature>
<feature type="binding site" evidence="1">
    <location>
        <position position="84"/>
    </location>
    <ligand>
        <name>FMN</name>
        <dbReference type="ChEBI" id="CHEBI:58210"/>
    </ligand>
</feature>
<feature type="binding site" evidence="1">
    <location>
        <begin position="109"/>
        <end position="113"/>
    </location>
    <ligand>
        <name>substrate</name>
    </ligand>
</feature>
<feature type="binding site" evidence="1">
    <location>
        <position position="137"/>
    </location>
    <ligand>
        <name>FMN</name>
        <dbReference type="ChEBI" id="CHEBI:58210"/>
    </ligand>
</feature>
<feature type="binding site" evidence="1">
    <location>
        <position position="170"/>
    </location>
    <ligand>
        <name>FMN</name>
        <dbReference type="ChEBI" id="CHEBI:58210"/>
    </ligand>
</feature>
<feature type="binding site" evidence="1">
    <location>
        <position position="170"/>
    </location>
    <ligand>
        <name>substrate</name>
    </ligand>
</feature>
<feature type="binding site" evidence="1">
    <location>
        <position position="175"/>
    </location>
    <ligand>
        <name>substrate</name>
    </ligand>
</feature>
<feature type="binding site" evidence="1">
    <location>
        <position position="215"/>
    </location>
    <ligand>
        <name>FMN</name>
        <dbReference type="ChEBI" id="CHEBI:58210"/>
    </ligand>
</feature>
<feature type="binding site" evidence="1">
    <location>
        <position position="243"/>
    </location>
    <ligand>
        <name>FMN</name>
        <dbReference type="ChEBI" id="CHEBI:58210"/>
    </ligand>
</feature>
<feature type="binding site" evidence="1">
    <location>
        <begin position="244"/>
        <end position="245"/>
    </location>
    <ligand>
        <name>substrate</name>
    </ligand>
</feature>
<feature type="binding site" evidence="1">
    <location>
        <position position="266"/>
    </location>
    <ligand>
        <name>FMN</name>
        <dbReference type="ChEBI" id="CHEBI:58210"/>
    </ligand>
</feature>
<feature type="binding site" evidence="1">
    <location>
        <position position="295"/>
    </location>
    <ligand>
        <name>FMN</name>
        <dbReference type="ChEBI" id="CHEBI:58210"/>
    </ligand>
</feature>
<feature type="binding site" evidence="1">
    <location>
        <begin position="316"/>
        <end position="317"/>
    </location>
    <ligand>
        <name>FMN</name>
        <dbReference type="ChEBI" id="CHEBI:58210"/>
    </ligand>
</feature>
<proteinExistence type="inferred from homology"/>
<gene>
    <name evidence="1" type="primary">pyrD</name>
    <name type="ordered locus">Nmul_A2706</name>
</gene>
<organism>
    <name type="scientific">Nitrosospira multiformis (strain ATCC 25196 / NCIMB 11849 / C 71)</name>
    <dbReference type="NCBI Taxonomy" id="323848"/>
    <lineage>
        <taxon>Bacteria</taxon>
        <taxon>Pseudomonadati</taxon>
        <taxon>Pseudomonadota</taxon>
        <taxon>Betaproteobacteria</taxon>
        <taxon>Nitrosomonadales</taxon>
        <taxon>Nitrosomonadaceae</taxon>
        <taxon>Nitrosospira</taxon>
    </lineage>
</organism>
<keyword id="KW-1003">Cell membrane</keyword>
<keyword id="KW-0285">Flavoprotein</keyword>
<keyword id="KW-0288">FMN</keyword>
<keyword id="KW-0472">Membrane</keyword>
<keyword id="KW-0560">Oxidoreductase</keyword>
<keyword id="KW-0665">Pyrimidine biosynthesis</keyword>
<keyword id="KW-1185">Reference proteome</keyword>
<evidence type="ECO:0000255" key="1">
    <source>
        <dbReference type="HAMAP-Rule" id="MF_00225"/>
    </source>
</evidence>
<evidence type="ECO:0000305" key="2"/>
<accession>Q2Y5H8</accession>
<reference key="1">
    <citation type="submission" date="2005-08" db="EMBL/GenBank/DDBJ databases">
        <title>Complete sequence of chromosome 1 of Nitrosospira multiformis ATCC 25196.</title>
        <authorList>
            <person name="Copeland A."/>
            <person name="Lucas S."/>
            <person name="Lapidus A."/>
            <person name="Barry K."/>
            <person name="Detter J.C."/>
            <person name="Glavina T."/>
            <person name="Hammon N."/>
            <person name="Israni S."/>
            <person name="Pitluck S."/>
            <person name="Chain P."/>
            <person name="Malfatti S."/>
            <person name="Shin M."/>
            <person name="Vergez L."/>
            <person name="Schmutz J."/>
            <person name="Larimer F."/>
            <person name="Land M."/>
            <person name="Hauser L."/>
            <person name="Kyrpides N."/>
            <person name="Lykidis A."/>
            <person name="Richardson P."/>
        </authorList>
    </citation>
    <scope>NUCLEOTIDE SEQUENCE [LARGE SCALE GENOMIC DNA]</scope>
    <source>
        <strain>ATCC 25196 / NCIMB 11849 / C 71</strain>
    </source>
</reference>
<dbReference type="EC" id="1.3.5.2" evidence="1"/>
<dbReference type="EMBL" id="CP000103">
    <property type="protein sequence ID" value="ABB75993.1"/>
    <property type="status" value="ALT_INIT"/>
    <property type="molecule type" value="Genomic_DNA"/>
</dbReference>
<dbReference type="RefSeq" id="WP_041353331.1">
    <property type="nucleotide sequence ID" value="NC_007614.1"/>
</dbReference>
<dbReference type="SMR" id="Q2Y5H8"/>
<dbReference type="STRING" id="323848.Nmul_A2706"/>
<dbReference type="KEGG" id="nmu:Nmul_A2706"/>
<dbReference type="eggNOG" id="COG0167">
    <property type="taxonomic scope" value="Bacteria"/>
</dbReference>
<dbReference type="HOGENOM" id="CLU_013640_2_0_4"/>
<dbReference type="OrthoDB" id="9802377at2"/>
<dbReference type="UniPathway" id="UPA00070">
    <property type="reaction ID" value="UER00946"/>
</dbReference>
<dbReference type="Proteomes" id="UP000002718">
    <property type="component" value="Chromosome"/>
</dbReference>
<dbReference type="GO" id="GO:0005737">
    <property type="term" value="C:cytoplasm"/>
    <property type="evidence" value="ECO:0007669"/>
    <property type="project" value="InterPro"/>
</dbReference>
<dbReference type="GO" id="GO:0005886">
    <property type="term" value="C:plasma membrane"/>
    <property type="evidence" value="ECO:0007669"/>
    <property type="project" value="UniProtKB-SubCell"/>
</dbReference>
<dbReference type="GO" id="GO:0106430">
    <property type="term" value="F:dihydroorotate dehydrogenase (quinone) activity"/>
    <property type="evidence" value="ECO:0007669"/>
    <property type="project" value="UniProtKB-EC"/>
</dbReference>
<dbReference type="GO" id="GO:0006207">
    <property type="term" value="P:'de novo' pyrimidine nucleobase biosynthetic process"/>
    <property type="evidence" value="ECO:0007669"/>
    <property type="project" value="InterPro"/>
</dbReference>
<dbReference type="GO" id="GO:0044205">
    <property type="term" value="P:'de novo' UMP biosynthetic process"/>
    <property type="evidence" value="ECO:0007669"/>
    <property type="project" value="UniProtKB-UniRule"/>
</dbReference>
<dbReference type="CDD" id="cd04738">
    <property type="entry name" value="DHOD_2_like"/>
    <property type="match status" value="1"/>
</dbReference>
<dbReference type="FunFam" id="3.20.20.70:FF:000028">
    <property type="entry name" value="Dihydroorotate dehydrogenase (quinone)"/>
    <property type="match status" value="1"/>
</dbReference>
<dbReference type="Gene3D" id="3.20.20.70">
    <property type="entry name" value="Aldolase class I"/>
    <property type="match status" value="1"/>
</dbReference>
<dbReference type="HAMAP" id="MF_00225">
    <property type="entry name" value="DHO_dh_type2"/>
    <property type="match status" value="1"/>
</dbReference>
<dbReference type="InterPro" id="IPR013785">
    <property type="entry name" value="Aldolase_TIM"/>
</dbReference>
<dbReference type="InterPro" id="IPR050074">
    <property type="entry name" value="DHO_dehydrogenase"/>
</dbReference>
<dbReference type="InterPro" id="IPR012135">
    <property type="entry name" value="Dihydroorotate_DH_1_2"/>
</dbReference>
<dbReference type="InterPro" id="IPR005719">
    <property type="entry name" value="Dihydroorotate_DH_2"/>
</dbReference>
<dbReference type="InterPro" id="IPR005720">
    <property type="entry name" value="Dihydroorotate_DH_cat"/>
</dbReference>
<dbReference type="InterPro" id="IPR001295">
    <property type="entry name" value="Dihydroorotate_DH_CS"/>
</dbReference>
<dbReference type="NCBIfam" id="NF003644">
    <property type="entry name" value="PRK05286.1-1"/>
    <property type="match status" value="1"/>
</dbReference>
<dbReference type="NCBIfam" id="NF003645">
    <property type="entry name" value="PRK05286.1-2"/>
    <property type="match status" value="1"/>
</dbReference>
<dbReference type="NCBIfam" id="NF003646">
    <property type="entry name" value="PRK05286.1-4"/>
    <property type="match status" value="1"/>
</dbReference>
<dbReference type="NCBIfam" id="NF003652">
    <property type="entry name" value="PRK05286.2-5"/>
    <property type="match status" value="1"/>
</dbReference>
<dbReference type="NCBIfam" id="TIGR01036">
    <property type="entry name" value="pyrD_sub2"/>
    <property type="match status" value="1"/>
</dbReference>
<dbReference type="PANTHER" id="PTHR48109:SF4">
    <property type="entry name" value="DIHYDROOROTATE DEHYDROGENASE (QUINONE), MITOCHONDRIAL"/>
    <property type="match status" value="1"/>
</dbReference>
<dbReference type="PANTHER" id="PTHR48109">
    <property type="entry name" value="DIHYDROOROTATE DEHYDROGENASE (QUINONE), MITOCHONDRIAL-RELATED"/>
    <property type="match status" value="1"/>
</dbReference>
<dbReference type="Pfam" id="PF01180">
    <property type="entry name" value="DHO_dh"/>
    <property type="match status" value="1"/>
</dbReference>
<dbReference type="PIRSF" id="PIRSF000164">
    <property type="entry name" value="DHO_oxidase"/>
    <property type="match status" value="1"/>
</dbReference>
<dbReference type="SUPFAM" id="SSF51395">
    <property type="entry name" value="FMN-linked oxidoreductases"/>
    <property type="match status" value="1"/>
</dbReference>
<dbReference type="PROSITE" id="PS00911">
    <property type="entry name" value="DHODEHASE_1"/>
    <property type="match status" value="1"/>
</dbReference>
<dbReference type="PROSITE" id="PS00912">
    <property type="entry name" value="DHODEHASE_2"/>
    <property type="match status" value="1"/>
</dbReference>
<comment type="function">
    <text evidence="1">Catalyzes the conversion of dihydroorotate to orotate with quinone as electron acceptor.</text>
</comment>
<comment type="catalytic activity">
    <reaction evidence="1">
        <text>(S)-dihydroorotate + a quinone = orotate + a quinol</text>
        <dbReference type="Rhea" id="RHEA:30187"/>
        <dbReference type="ChEBI" id="CHEBI:24646"/>
        <dbReference type="ChEBI" id="CHEBI:30839"/>
        <dbReference type="ChEBI" id="CHEBI:30864"/>
        <dbReference type="ChEBI" id="CHEBI:132124"/>
        <dbReference type="EC" id="1.3.5.2"/>
    </reaction>
</comment>
<comment type="cofactor">
    <cofactor evidence="1">
        <name>FMN</name>
        <dbReference type="ChEBI" id="CHEBI:58210"/>
    </cofactor>
    <text evidence="1">Binds 1 FMN per subunit.</text>
</comment>
<comment type="pathway">
    <text evidence="1">Pyrimidine metabolism; UMP biosynthesis via de novo pathway; orotate from (S)-dihydroorotate (quinone route): step 1/1.</text>
</comment>
<comment type="subunit">
    <text evidence="1">Monomer.</text>
</comment>
<comment type="subcellular location">
    <subcellularLocation>
        <location evidence="1">Cell membrane</location>
        <topology evidence="1">Peripheral membrane protein</topology>
    </subcellularLocation>
</comment>
<comment type="similarity">
    <text evidence="1">Belongs to the dihydroorotate dehydrogenase family. Type 2 subfamily.</text>
</comment>
<comment type="sequence caution" evidence="2">
    <conflict type="erroneous initiation">
        <sequence resource="EMBL-CDS" id="ABB75993"/>
    </conflict>
</comment>
<name>PYRD_NITMU</name>